<comment type="function">
    <text evidence="1">Catalyzes the initial step of the lipid cycle reactions in the biosynthesis of the cell wall peptidoglycan: transfers peptidoglycan precursor phospho-MurNAc-pentapeptide from UDP-MurNAc-pentapeptide onto the lipid carrier undecaprenyl phosphate, yielding undecaprenyl-pyrophosphoryl-MurNAc-pentapeptide, known as lipid I.</text>
</comment>
<comment type="catalytic activity">
    <reaction evidence="1">
        <text>UDP-N-acetyl-alpha-D-muramoyl-L-alanyl-gamma-D-glutamyl-meso-2,6-diaminopimeloyl-D-alanyl-D-alanine + di-trans,octa-cis-undecaprenyl phosphate = di-trans,octa-cis-undecaprenyl diphospho-N-acetyl-alpha-D-muramoyl-L-alanyl-D-glutamyl-meso-2,6-diaminopimeloyl-D-alanyl-D-alanine + UMP</text>
        <dbReference type="Rhea" id="RHEA:28386"/>
        <dbReference type="ChEBI" id="CHEBI:57865"/>
        <dbReference type="ChEBI" id="CHEBI:60392"/>
        <dbReference type="ChEBI" id="CHEBI:61386"/>
        <dbReference type="ChEBI" id="CHEBI:61387"/>
        <dbReference type="EC" id="2.7.8.13"/>
    </reaction>
</comment>
<comment type="cofactor">
    <cofactor evidence="1">
        <name>Mg(2+)</name>
        <dbReference type="ChEBI" id="CHEBI:18420"/>
    </cofactor>
</comment>
<comment type="pathway">
    <text evidence="1">Cell wall biogenesis; peptidoglycan biosynthesis.</text>
</comment>
<comment type="subcellular location">
    <subcellularLocation>
        <location evidence="1">Cell inner membrane</location>
        <topology evidence="1">Multi-pass membrane protein</topology>
    </subcellularLocation>
</comment>
<comment type="similarity">
    <text evidence="1">Belongs to the glycosyltransferase 4 family. MraY subfamily.</text>
</comment>
<protein>
    <recommendedName>
        <fullName evidence="1">Phospho-N-acetylmuramoyl-pentapeptide-transferase</fullName>
        <ecNumber evidence="1">2.7.8.13</ecNumber>
    </recommendedName>
    <alternativeName>
        <fullName evidence="1">UDP-MurNAc-pentapeptide phosphotransferase</fullName>
    </alternativeName>
</protein>
<proteinExistence type="inferred from homology"/>
<gene>
    <name evidence="1" type="primary">mraY</name>
    <name type="ordered locus">ECED1_0088</name>
</gene>
<keyword id="KW-0131">Cell cycle</keyword>
<keyword id="KW-0132">Cell division</keyword>
<keyword id="KW-0997">Cell inner membrane</keyword>
<keyword id="KW-1003">Cell membrane</keyword>
<keyword id="KW-0133">Cell shape</keyword>
<keyword id="KW-0961">Cell wall biogenesis/degradation</keyword>
<keyword id="KW-0460">Magnesium</keyword>
<keyword id="KW-0472">Membrane</keyword>
<keyword id="KW-0479">Metal-binding</keyword>
<keyword id="KW-0573">Peptidoglycan synthesis</keyword>
<keyword id="KW-0808">Transferase</keyword>
<keyword id="KW-0812">Transmembrane</keyword>
<keyword id="KW-1133">Transmembrane helix</keyword>
<evidence type="ECO:0000255" key="1">
    <source>
        <dbReference type="HAMAP-Rule" id="MF_00038"/>
    </source>
</evidence>
<feature type="chain" id="PRO_1000117181" description="Phospho-N-acetylmuramoyl-pentapeptide-transferase">
    <location>
        <begin position="1"/>
        <end position="360"/>
    </location>
</feature>
<feature type="topological domain" description="Periplasmic" evidence="1">
    <location>
        <begin position="1"/>
        <end position="25"/>
    </location>
</feature>
<feature type="transmembrane region" description="Helical" evidence="1">
    <location>
        <begin position="26"/>
        <end position="46"/>
    </location>
</feature>
<feature type="topological domain" description="Cytoplasmic" evidence="1">
    <location>
        <begin position="47"/>
        <end position="71"/>
    </location>
</feature>
<feature type="transmembrane region" description="Helical" evidence="1">
    <location>
        <begin position="72"/>
        <end position="92"/>
    </location>
</feature>
<feature type="topological domain" description="Periplasmic" evidence="1">
    <location>
        <position position="93"/>
    </location>
</feature>
<feature type="transmembrane region" description="Helical" evidence="1">
    <location>
        <begin position="94"/>
        <end position="114"/>
    </location>
</feature>
<feature type="topological domain" description="Cytoplasmic" evidence="1">
    <location>
        <begin position="115"/>
        <end position="131"/>
    </location>
</feature>
<feature type="transmembrane region" description="Helical" evidence="1">
    <location>
        <begin position="132"/>
        <end position="152"/>
    </location>
</feature>
<feature type="topological domain" description="Periplasmic" evidence="1">
    <location>
        <begin position="153"/>
        <end position="167"/>
    </location>
</feature>
<feature type="transmembrane region" description="Helical" evidence="1">
    <location>
        <begin position="168"/>
        <end position="188"/>
    </location>
</feature>
<feature type="topological domain" description="Cytoplasmic" evidence="1">
    <location>
        <begin position="189"/>
        <end position="198"/>
    </location>
</feature>
<feature type="transmembrane region" description="Helical" evidence="1">
    <location>
        <begin position="199"/>
        <end position="219"/>
    </location>
</feature>
<feature type="topological domain" description="Periplasmic" evidence="1">
    <location>
        <begin position="220"/>
        <end position="235"/>
    </location>
</feature>
<feature type="transmembrane region" description="Helical" evidence="1">
    <location>
        <begin position="236"/>
        <end position="256"/>
    </location>
</feature>
<feature type="topological domain" description="Cytoplasmic" evidence="1">
    <location>
        <begin position="257"/>
        <end position="262"/>
    </location>
</feature>
<feature type="transmembrane region" description="Helical" evidence="1">
    <location>
        <begin position="263"/>
        <end position="283"/>
    </location>
</feature>
<feature type="topological domain" description="Periplasmic" evidence="1">
    <location>
        <begin position="284"/>
        <end position="287"/>
    </location>
</feature>
<feature type="transmembrane region" description="Helical" evidence="1">
    <location>
        <begin position="288"/>
        <end position="308"/>
    </location>
</feature>
<feature type="topological domain" description="Cytoplasmic" evidence="1">
    <location>
        <begin position="309"/>
        <end position="337"/>
    </location>
</feature>
<feature type="transmembrane region" description="Helical" evidence="1">
    <location>
        <begin position="338"/>
        <end position="358"/>
    </location>
</feature>
<feature type="topological domain" description="Periplasmic" evidence="1">
    <location>
        <begin position="359"/>
        <end position="360"/>
    </location>
</feature>
<organism>
    <name type="scientific">Escherichia coli O81 (strain ED1a)</name>
    <dbReference type="NCBI Taxonomy" id="585397"/>
    <lineage>
        <taxon>Bacteria</taxon>
        <taxon>Pseudomonadati</taxon>
        <taxon>Pseudomonadota</taxon>
        <taxon>Gammaproteobacteria</taxon>
        <taxon>Enterobacterales</taxon>
        <taxon>Enterobacteriaceae</taxon>
        <taxon>Escherichia</taxon>
    </lineage>
</organism>
<name>MRAY_ECO81</name>
<reference key="1">
    <citation type="journal article" date="2009" name="PLoS Genet.">
        <title>Organised genome dynamics in the Escherichia coli species results in highly diverse adaptive paths.</title>
        <authorList>
            <person name="Touchon M."/>
            <person name="Hoede C."/>
            <person name="Tenaillon O."/>
            <person name="Barbe V."/>
            <person name="Baeriswyl S."/>
            <person name="Bidet P."/>
            <person name="Bingen E."/>
            <person name="Bonacorsi S."/>
            <person name="Bouchier C."/>
            <person name="Bouvet O."/>
            <person name="Calteau A."/>
            <person name="Chiapello H."/>
            <person name="Clermont O."/>
            <person name="Cruveiller S."/>
            <person name="Danchin A."/>
            <person name="Diard M."/>
            <person name="Dossat C."/>
            <person name="Karoui M.E."/>
            <person name="Frapy E."/>
            <person name="Garry L."/>
            <person name="Ghigo J.M."/>
            <person name="Gilles A.M."/>
            <person name="Johnson J."/>
            <person name="Le Bouguenec C."/>
            <person name="Lescat M."/>
            <person name="Mangenot S."/>
            <person name="Martinez-Jehanne V."/>
            <person name="Matic I."/>
            <person name="Nassif X."/>
            <person name="Oztas S."/>
            <person name="Petit M.A."/>
            <person name="Pichon C."/>
            <person name="Rouy Z."/>
            <person name="Ruf C.S."/>
            <person name="Schneider D."/>
            <person name="Tourret J."/>
            <person name="Vacherie B."/>
            <person name="Vallenet D."/>
            <person name="Medigue C."/>
            <person name="Rocha E.P.C."/>
            <person name="Denamur E."/>
        </authorList>
    </citation>
    <scope>NUCLEOTIDE SEQUENCE [LARGE SCALE GENOMIC DNA]</scope>
    <source>
        <strain>ED1a</strain>
    </source>
</reference>
<accession>B7MNU6</accession>
<dbReference type="EC" id="2.7.8.13" evidence="1"/>
<dbReference type="EMBL" id="CU928162">
    <property type="protein sequence ID" value="CAR06311.1"/>
    <property type="molecule type" value="Genomic_DNA"/>
</dbReference>
<dbReference type="RefSeq" id="WP_000964134.1">
    <property type="nucleotide sequence ID" value="NC_011745.1"/>
</dbReference>
<dbReference type="SMR" id="B7MNU6"/>
<dbReference type="GeneID" id="75169987"/>
<dbReference type="KEGG" id="ecq:ECED1_0088"/>
<dbReference type="HOGENOM" id="CLU_023982_0_0_6"/>
<dbReference type="UniPathway" id="UPA00219"/>
<dbReference type="Proteomes" id="UP000000748">
    <property type="component" value="Chromosome"/>
</dbReference>
<dbReference type="GO" id="GO:0005886">
    <property type="term" value="C:plasma membrane"/>
    <property type="evidence" value="ECO:0007669"/>
    <property type="project" value="UniProtKB-SubCell"/>
</dbReference>
<dbReference type="GO" id="GO:0046872">
    <property type="term" value="F:metal ion binding"/>
    <property type="evidence" value="ECO:0007669"/>
    <property type="project" value="UniProtKB-KW"/>
</dbReference>
<dbReference type="GO" id="GO:0008963">
    <property type="term" value="F:phospho-N-acetylmuramoyl-pentapeptide-transferase activity"/>
    <property type="evidence" value="ECO:0007669"/>
    <property type="project" value="UniProtKB-UniRule"/>
</dbReference>
<dbReference type="GO" id="GO:0051992">
    <property type="term" value="F:UDP-N-acetylmuramoyl-L-alanyl-D-glutamyl-meso-2,6-diaminopimelyl-D-alanyl-D-alanine:undecaprenyl-phosphate transferase activity"/>
    <property type="evidence" value="ECO:0007669"/>
    <property type="project" value="RHEA"/>
</dbReference>
<dbReference type="GO" id="GO:0051301">
    <property type="term" value="P:cell division"/>
    <property type="evidence" value="ECO:0007669"/>
    <property type="project" value="UniProtKB-KW"/>
</dbReference>
<dbReference type="GO" id="GO:0071555">
    <property type="term" value="P:cell wall organization"/>
    <property type="evidence" value="ECO:0007669"/>
    <property type="project" value="UniProtKB-KW"/>
</dbReference>
<dbReference type="GO" id="GO:0009252">
    <property type="term" value="P:peptidoglycan biosynthetic process"/>
    <property type="evidence" value="ECO:0007669"/>
    <property type="project" value="UniProtKB-UniRule"/>
</dbReference>
<dbReference type="GO" id="GO:0008360">
    <property type="term" value="P:regulation of cell shape"/>
    <property type="evidence" value="ECO:0007669"/>
    <property type="project" value="UniProtKB-KW"/>
</dbReference>
<dbReference type="CDD" id="cd06852">
    <property type="entry name" value="GT_MraY"/>
    <property type="match status" value="1"/>
</dbReference>
<dbReference type="HAMAP" id="MF_00038">
    <property type="entry name" value="MraY"/>
    <property type="match status" value="1"/>
</dbReference>
<dbReference type="InterPro" id="IPR000715">
    <property type="entry name" value="Glycosyl_transferase_4"/>
</dbReference>
<dbReference type="InterPro" id="IPR003524">
    <property type="entry name" value="PNAcMuramoyl-5peptid_Trfase"/>
</dbReference>
<dbReference type="InterPro" id="IPR018480">
    <property type="entry name" value="PNAcMuramoyl-5peptid_Trfase_CS"/>
</dbReference>
<dbReference type="NCBIfam" id="TIGR00445">
    <property type="entry name" value="mraY"/>
    <property type="match status" value="1"/>
</dbReference>
<dbReference type="PANTHER" id="PTHR22926">
    <property type="entry name" value="PHOSPHO-N-ACETYLMURAMOYL-PENTAPEPTIDE-TRANSFERASE"/>
    <property type="match status" value="1"/>
</dbReference>
<dbReference type="PANTHER" id="PTHR22926:SF5">
    <property type="entry name" value="PHOSPHO-N-ACETYLMURAMOYL-PENTAPEPTIDE-TRANSFERASE HOMOLOG"/>
    <property type="match status" value="1"/>
</dbReference>
<dbReference type="Pfam" id="PF00953">
    <property type="entry name" value="Glycos_transf_4"/>
    <property type="match status" value="1"/>
</dbReference>
<dbReference type="Pfam" id="PF10555">
    <property type="entry name" value="MraY_sig1"/>
    <property type="match status" value="1"/>
</dbReference>
<dbReference type="PROSITE" id="PS01347">
    <property type="entry name" value="MRAY_1"/>
    <property type="match status" value="1"/>
</dbReference>
<dbReference type="PROSITE" id="PS01348">
    <property type="entry name" value="MRAY_2"/>
    <property type="match status" value="1"/>
</dbReference>
<sequence length="360" mass="39903">MLVWLAEHLVKYYSGFNVFSYLTFRAIVSLLTALFISLWMGPRMIAHLQKLSFGQVVRNDGPESHFSKRGTPTMGGIMILTAIVISVLLWAYPSNPYVWCVLVVLVGYGVIGFVDDYRKVVRKDTKGLIARWKYFWMSVIALGVAFALYLVGKDTPATQLVVPFFKDVMPQLGLFYILLAYFVIVGTGNAVNLTDGLDGLAIMPTVFVAGGFALVAWATGNMNFASYLHIPYLRHAGELVIVCTAIVGAGLGFLWFNTYPAQVFMGDVGSLALGGALGIIAVLLRQEFLLVIMGGVFVVETLSVILQVGSFKLRGQRIFRMAPIHHHYELKGWPEPRVIVRFWIISLMLVLIGLATLKVR</sequence>